<reference key="1">
    <citation type="journal article" date="1992" name="Virology">
        <title>The DNA sequence of equine herpesvirus-1.</title>
        <authorList>
            <person name="Telford E.A.R."/>
            <person name="Watson M.S."/>
            <person name="McBride K."/>
            <person name="Davison A.J."/>
        </authorList>
    </citation>
    <scope>NUCLEOTIDE SEQUENCE [LARGE SCALE GENOMIC DNA]</scope>
</reference>
<gene>
    <name type="ORF">5</name>
</gene>
<protein>
    <recommendedName>
        <fullName>mRNA export factor ICP27 homolog</fullName>
    </recommendedName>
    <alternativeName>
        <fullName>Transcriptional regulator IE63 homolog</fullName>
    </alternativeName>
</protein>
<dbReference type="EMBL" id="AY665713">
    <property type="protein sequence ID" value="AAT67262.1"/>
    <property type="molecule type" value="Genomic_DNA"/>
</dbReference>
<dbReference type="PIR" id="F36795">
    <property type="entry name" value="WZBEA4"/>
</dbReference>
<dbReference type="SMR" id="P28939"/>
<dbReference type="KEGG" id="vg:1487550"/>
<dbReference type="Proteomes" id="UP000001189">
    <property type="component" value="Segment"/>
</dbReference>
<dbReference type="GO" id="GO:0030430">
    <property type="term" value="C:host cell cytoplasm"/>
    <property type="evidence" value="ECO:0007669"/>
    <property type="project" value="UniProtKB-SubCell"/>
</dbReference>
<dbReference type="GO" id="GO:0042025">
    <property type="term" value="C:host cell nucleus"/>
    <property type="evidence" value="ECO:0007669"/>
    <property type="project" value="UniProtKB-SubCell"/>
</dbReference>
<dbReference type="GO" id="GO:0003723">
    <property type="term" value="F:RNA binding"/>
    <property type="evidence" value="ECO:0007669"/>
    <property type="project" value="UniProtKB-KW"/>
</dbReference>
<dbReference type="GO" id="GO:0008270">
    <property type="term" value="F:zinc ion binding"/>
    <property type="evidence" value="ECO:0007669"/>
    <property type="project" value="UniProtKB-KW"/>
</dbReference>
<dbReference type="GO" id="GO:0006355">
    <property type="term" value="P:regulation of DNA-templated transcription"/>
    <property type="evidence" value="ECO:0007669"/>
    <property type="project" value="InterPro"/>
</dbReference>
<dbReference type="InterPro" id="IPR008648">
    <property type="entry name" value="ICP27-like"/>
</dbReference>
<dbReference type="Pfam" id="PF05459">
    <property type="entry name" value="Herpes_UL69"/>
    <property type="match status" value="1"/>
</dbReference>
<name>ICP27_EHV1B</name>
<proteinExistence type="inferred from homology"/>
<feature type="chain" id="PRO_0000115826" description="mRNA export factor ICP27 homolog">
    <location>
        <begin position="1"/>
        <end position="470"/>
    </location>
</feature>
<feature type="zinc finger region" description="CHC2-type" evidence="2">
    <location>
        <begin position="359"/>
        <end position="446"/>
    </location>
</feature>
<feature type="region of interest" description="Disordered" evidence="3">
    <location>
        <begin position="1"/>
        <end position="31"/>
    </location>
</feature>
<feature type="region of interest" description="Disordered" evidence="3">
    <location>
        <begin position="62"/>
        <end position="204"/>
    </location>
</feature>
<feature type="compositionally biased region" description="Polar residues" evidence="3">
    <location>
        <begin position="71"/>
        <end position="85"/>
    </location>
</feature>
<feature type="compositionally biased region" description="Basic residues" evidence="3">
    <location>
        <begin position="94"/>
        <end position="107"/>
    </location>
</feature>
<feature type="compositionally biased region" description="Basic residues" evidence="3">
    <location>
        <begin position="178"/>
        <end position="187"/>
    </location>
</feature>
<feature type="binding site" evidence="2">
    <location>
        <position position="359"/>
    </location>
    <ligand>
        <name>Zn(2+)</name>
        <dbReference type="ChEBI" id="CHEBI:29105"/>
    </ligand>
</feature>
<feature type="binding site" evidence="2">
    <location>
        <position position="437"/>
    </location>
    <ligand>
        <name>Zn(2+)</name>
        <dbReference type="ChEBI" id="CHEBI:29105"/>
    </ligand>
</feature>
<feature type="binding site" evidence="2">
    <location>
        <position position="441"/>
    </location>
    <ligand>
        <name>Zn(2+)</name>
        <dbReference type="ChEBI" id="CHEBI:29105"/>
    </ligand>
</feature>
<feature type="binding site" evidence="2">
    <location>
        <position position="446"/>
    </location>
    <ligand>
        <name>Zn(2+)</name>
        <dbReference type="ChEBI" id="CHEBI:29105"/>
    </ligand>
</feature>
<evidence type="ECO:0000250" key="1"/>
<evidence type="ECO:0000250" key="2">
    <source>
        <dbReference type="UniProtKB" id="P10238"/>
    </source>
</evidence>
<evidence type="ECO:0000256" key="3">
    <source>
        <dbReference type="SAM" id="MobiDB-lite"/>
    </source>
</evidence>
<evidence type="ECO:0000305" key="4"/>
<comment type="function">
    <text evidence="1">Multifunctional regulator of the expression of viral genes that mediates nuclear export of viral intronless mRNAs. This immediate early (EI) protein promotes the nuclear export of viral intronless mRNAs by interacting with mRNAs and host NXF1/TAP (By similarity).</text>
</comment>
<comment type="subunit">
    <text evidence="1">Homodimer. Homodimerization is required for transactivation. Associates in a complex with RNA, and host export factors NXF1/TAP and ALYREF; these interactions allow nuclear export of viral transcripts. Interacts with three host shuttling SR proteins SRSF1, SRSF3 and SRSF7. Interacts with host SRPK1. Interacts with IE62; this interaction enhances IE62 transactivation (By similarity).</text>
</comment>
<comment type="subcellular location">
    <subcellularLocation>
        <location evidence="1">Host cytoplasm</location>
    </subcellularLocation>
    <subcellularLocation>
        <location evidence="1">Host nucleus</location>
    </subcellularLocation>
    <text evidence="1">Shuttles between the nucleus and the cytoplasm.</text>
</comment>
<comment type="domain">
    <text evidence="1">Binds viral intronless RNAs and SR proteins through the Arg-rich region.</text>
</comment>
<comment type="similarity">
    <text evidence="4">Belongs to the HHV-1 ICP27 protein family.</text>
</comment>
<organism>
    <name type="scientific">Equine herpesvirus 1 (strain Ab4p)</name>
    <name type="common">EHV-1</name>
    <name type="synonym">Equine abortion virus</name>
    <dbReference type="NCBI Taxonomy" id="31520"/>
    <lineage>
        <taxon>Viruses</taxon>
        <taxon>Duplodnaviria</taxon>
        <taxon>Heunggongvirae</taxon>
        <taxon>Peploviricota</taxon>
        <taxon>Herviviricetes</taxon>
        <taxon>Herpesvirales</taxon>
        <taxon>Orthoherpesviridae</taxon>
        <taxon>Alphaherpesvirinae</taxon>
        <taxon>Varicellovirus</taxon>
        <taxon>Varicellovirus equidalpha1</taxon>
        <taxon>Equid alphaherpesvirus 1</taxon>
    </lineage>
</organism>
<organismHost>
    <name type="scientific">Equus caballus</name>
    <name type="common">Horse</name>
    <dbReference type="NCBI Taxonomy" id="9796"/>
</organismHost>
<accession>P28939</accession>
<accession>Q6DLK6</accession>
<sequence length="470" mass="51321">MALSSVSSCEPMEDEMSIMGSDTEDNFTGGDTCAEATRGLVNKSAFVPTQTVGTVSALRNVVGDPPKSVVVSFSASPQRAQPSNPKSERPAFGHGRRNRRRPFRRNNWKQQQRGWEKPEPENVPARQSAGSWPKRSSLPVHMRLGQRGGDSSSADSGHGGAGPSDRWRFKTRTQSVARVHRNRRRGNANHGSNTPGRSAGDRLNAAAASSIADVCRRVTSSRIGEMFHGARETLTTPVKNGGFRAENSSPWAPVLGFGSDQFNPEARRITWDTLVEHGVNLYKLFEVRSHAAEAARSLRDAVMRGENLLEALASADETLSWCKMIVTKNLPMRTRDPIISSSVALLDNLRLKLEPFMRCYLSSSGSPTLAELCDHQRLSDVACVPTFMFVMLARIARAVGSGAETVSRDALGPDGRVLADYVPGACLAGTLEAIDAHKRRCKADTCSLVSAYTLVPVYLHGKYFYCNQIF</sequence>
<keyword id="KW-0010">Activator</keyword>
<keyword id="KW-0244">Early protein</keyword>
<keyword id="KW-1035">Host cytoplasm</keyword>
<keyword id="KW-1048">Host nucleus</keyword>
<keyword id="KW-0945">Host-virus interaction</keyword>
<keyword id="KW-0479">Metal-binding</keyword>
<keyword id="KW-1185">Reference proteome</keyword>
<keyword id="KW-0694">RNA-binding</keyword>
<keyword id="KW-0804">Transcription</keyword>
<keyword id="KW-0805">Transcription regulation</keyword>
<keyword id="KW-0862">Zinc</keyword>
<keyword id="KW-0863">Zinc-finger</keyword>